<proteinExistence type="inferred from homology"/>
<dbReference type="EMBL" id="AE008923">
    <property type="protein sequence ID" value="AAM36121.1"/>
    <property type="molecule type" value="Genomic_DNA"/>
</dbReference>
<dbReference type="RefSeq" id="WP_003484326.1">
    <property type="nucleotide sequence ID" value="NC_003919.1"/>
</dbReference>
<dbReference type="SMR" id="Q8PN24"/>
<dbReference type="GeneID" id="97509599"/>
<dbReference type="KEGG" id="xac:XAC1249"/>
<dbReference type="eggNOG" id="COG0211">
    <property type="taxonomic scope" value="Bacteria"/>
</dbReference>
<dbReference type="HOGENOM" id="CLU_095424_4_0_6"/>
<dbReference type="Proteomes" id="UP000000576">
    <property type="component" value="Chromosome"/>
</dbReference>
<dbReference type="GO" id="GO:0022625">
    <property type="term" value="C:cytosolic large ribosomal subunit"/>
    <property type="evidence" value="ECO:0007669"/>
    <property type="project" value="TreeGrafter"/>
</dbReference>
<dbReference type="GO" id="GO:0003735">
    <property type="term" value="F:structural constituent of ribosome"/>
    <property type="evidence" value="ECO:0007669"/>
    <property type="project" value="InterPro"/>
</dbReference>
<dbReference type="GO" id="GO:0006412">
    <property type="term" value="P:translation"/>
    <property type="evidence" value="ECO:0007669"/>
    <property type="project" value="UniProtKB-UniRule"/>
</dbReference>
<dbReference type="FunFam" id="2.40.50.100:FF:000001">
    <property type="entry name" value="50S ribosomal protein L27"/>
    <property type="match status" value="1"/>
</dbReference>
<dbReference type="Gene3D" id="2.40.50.100">
    <property type="match status" value="1"/>
</dbReference>
<dbReference type="HAMAP" id="MF_00539">
    <property type="entry name" value="Ribosomal_bL27"/>
    <property type="match status" value="1"/>
</dbReference>
<dbReference type="InterPro" id="IPR001684">
    <property type="entry name" value="Ribosomal_bL27"/>
</dbReference>
<dbReference type="InterPro" id="IPR018261">
    <property type="entry name" value="Ribosomal_bL27_CS"/>
</dbReference>
<dbReference type="NCBIfam" id="TIGR00062">
    <property type="entry name" value="L27"/>
    <property type="match status" value="1"/>
</dbReference>
<dbReference type="PANTHER" id="PTHR15893:SF0">
    <property type="entry name" value="LARGE RIBOSOMAL SUBUNIT PROTEIN BL27M"/>
    <property type="match status" value="1"/>
</dbReference>
<dbReference type="PANTHER" id="PTHR15893">
    <property type="entry name" value="RIBOSOMAL PROTEIN L27"/>
    <property type="match status" value="1"/>
</dbReference>
<dbReference type="Pfam" id="PF01016">
    <property type="entry name" value="Ribosomal_L27"/>
    <property type="match status" value="1"/>
</dbReference>
<dbReference type="PRINTS" id="PR00063">
    <property type="entry name" value="RIBOSOMALL27"/>
</dbReference>
<dbReference type="SUPFAM" id="SSF110324">
    <property type="entry name" value="Ribosomal L27 protein-like"/>
    <property type="match status" value="1"/>
</dbReference>
<dbReference type="PROSITE" id="PS00831">
    <property type="entry name" value="RIBOSOMAL_L27"/>
    <property type="match status" value="1"/>
</dbReference>
<evidence type="ECO:0000255" key="1">
    <source>
        <dbReference type="HAMAP-Rule" id="MF_00539"/>
    </source>
</evidence>
<evidence type="ECO:0000305" key="2"/>
<comment type="similarity">
    <text evidence="1">Belongs to the bacterial ribosomal protein bL27 family.</text>
</comment>
<reference key="1">
    <citation type="journal article" date="2002" name="Nature">
        <title>Comparison of the genomes of two Xanthomonas pathogens with differing host specificities.</title>
        <authorList>
            <person name="da Silva A.C.R."/>
            <person name="Ferro J.A."/>
            <person name="Reinach F.C."/>
            <person name="Farah C.S."/>
            <person name="Furlan L.R."/>
            <person name="Quaggio R.B."/>
            <person name="Monteiro-Vitorello C.B."/>
            <person name="Van Sluys M.A."/>
            <person name="Almeida N.F. Jr."/>
            <person name="Alves L.M.C."/>
            <person name="do Amaral A.M."/>
            <person name="Bertolini M.C."/>
            <person name="Camargo L.E.A."/>
            <person name="Camarotte G."/>
            <person name="Cannavan F."/>
            <person name="Cardozo J."/>
            <person name="Chambergo F."/>
            <person name="Ciapina L.P."/>
            <person name="Cicarelli R.M.B."/>
            <person name="Coutinho L.L."/>
            <person name="Cursino-Santos J.R."/>
            <person name="El-Dorry H."/>
            <person name="Faria J.B."/>
            <person name="Ferreira A.J.S."/>
            <person name="Ferreira R.C.C."/>
            <person name="Ferro M.I.T."/>
            <person name="Formighieri E.F."/>
            <person name="Franco M.C."/>
            <person name="Greggio C.C."/>
            <person name="Gruber A."/>
            <person name="Katsuyama A.M."/>
            <person name="Kishi L.T."/>
            <person name="Leite R.P."/>
            <person name="Lemos E.G.M."/>
            <person name="Lemos M.V.F."/>
            <person name="Locali E.C."/>
            <person name="Machado M.A."/>
            <person name="Madeira A.M.B.N."/>
            <person name="Martinez-Rossi N.M."/>
            <person name="Martins E.C."/>
            <person name="Meidanis J."/>
            <person name="Menck C.F.M."/>
            <person name="Miyaki C.Y."/>
            <person name="Moon D.H."/>
            <person name="Moreira L.M."/>
            <person name="Novo M.T.M."/>
            <person name="Okura V.K."/>
            <person name="Oliveira M.C."/>
            <person name="Oliveira V.R."/>
            <person name="Pereira H.A."/>
            <person name="Rossi A."/>
            <person name="Sena J.A.D."/>
            <person name="Silva C."/>
            <person name="de Souza R.F."/>
            <person name="Spinola L.A.F."/>
            <person name="Takita M.A."/>
            <person name="Tamura R.E."/>
            <person name="Teixeira E.C."/>
            <person name="Tezza R.I.D."/>
            <person name="Trindade dos Santos M."/>
            <person name="Truffi D."/>
            <person name="Tsai S.M."/>
            <person name="White F.F."/>
            <person name="Setubal J.C."/>
            <person name="Kitajima J.P."/>
        </authorList>
    </citation>
    <scope>NUCLEOTIDE SEQUENCE [LARGE SCALE GENOMIC DNA]</scope>
    <source>
        <strain>306</strain>
    </source>
</reference>
<feature type="chain" id="PRO_0000181208" description="Large ribosomal subunit protein bL27">
    <location>
        <begin position="1"/>
        <end position="86"/>
    </location>
</feature>
<organism>
    <name type="scientific">Xanthomonas axonopodis pv. citri (strain 306)</name>
    <dbReference type="NCBI Taxonomy" id="190486"/>
    <lineage>
        <taxon>Bacteria</taxon>
        <taxon>Pseudomonadati</taxon>
        <taxon>Pseudomonadota</taxon>
        <taxon>Gammaproteobacteria</taxon>
        <taxon>Lysobacterales</taxon>
        <taxon>Lysobacteraceae</taxon>
        <taxon>Xanthomonas</taxon>
    </lineage>
</organism>
<name>RL27_XANAC</name>
<gene>
    <name evidence="1" type="primary">rpmA</name>
    <name type="ordered locus">XAC1249</name>
</gene>
<protein>
    <recommendedName>
        <fullName evidence="1">Large ribosomal subunit protein bL27</fullName>
    </recommendedName>
    <alternativeName>
        <fullName evidence="2">50S ribosomal protein L27</fullName>
    </alternativeName>
</protein>
<sequence length="86" mass="9101">MAHKKGVGSSRNGRDSNPKYLGVKIFGGQAIDAGNIIVRQRGTQFHPGAGVGLGRDHTLFALVDGKVEFSTKGPKKRRTVSVVAEA</sequence>
<accession>Q8PN24</accession>
<keyword id="KW-0687">Ribonucleoprotein</keyword>
<keyword id="KW-0689">Ribosomal protein</keyword>